<dbReference type="EC" id="2.4.2.1" evidence="2"/>
<dbReference type="EC" id="3.5.4.4" evidence="2"/>
<dbReference type="EC" id="2.4.2.28" evidence="2"/>
<dbReference type="EMBL" id="AE000657">
    <property type="protein sequence ID" value="AAC06517.1"/>
    <property type="molecule type" value="Genomic_DNA"/>
</dbReference>
<dbReference type="PIR" id="G70315">
    <property type="entry name" value="G70315"/>
</dbReference>
<dbReference type="RefSeq" id="NP_213114.1">
    <property type="nucleotide sequence ID" value="NC_000918.1"/>
</dbReference>
<dbReference type="RefSeq" id="WP_010880052.1">
    <property type="nucleotide sequence ID" value="NC_000918.1"/>
</dbReference>
<dbReference type="SMR" id="O66554"/>
<dbReference type="FunCoup" id="O66554">
    <property type="interactions" value="330"/>
</dbReference>
<dbReference type="STRING" id="224324.aq_167"/>
<dbReference type="EnsemblBacteria" id="AAC06517">
    <property type="protein sequence ID" value="AAC06517"/>
    <property type="gene ID" value="aq_167"/>
</dbReference>
<dbReference type="KEGG" id="aae:aq_167"/>
<dbReference type="PATRIC" id="fig|224324.8.peg.143"/>
<dbReference type="eggNOG" id="COG1496">
    <property type="taxonomic scope" value="Bacteria"/>
</dbReference>
<dbReference type="HOGENOM" id="CLU_065784_2_0_0"/>
<dbReference type="InParanoid" id="O66554"/>
<dbReference type="OrthoDB" id="4279at2"/>
<dbReference type="Proteomes" id="UP000000798">
    <property type="component" value="Chromosome"/>
</dbReference>
<dbReference type="GO" id="GO:0004000">
    <property type="term" value="F:adenosine deaminase activity"/>
    <property type="evidence" value="ECO:0007669"/>
    <property type="project" value="RHEA"/>
</dbReference>
<dbReference type="GO" id="GO:0005507">
    <property type="term" value="F:copper ion binding"/>
    <property type="evidence" value="ECO:0000318"/>
    <property type="project" value="GO_Central"/>
</dbReference>
<dbReference type="GO" id="GO:0016491">
    <property type="term" value="F:oxidoreductase activity"/>
    <property type="evidence" value="ECO:0007669"/>
    <property type="project" value="UniProtKB-KW"/>
</dbReference>
<dbReference type="GO" id="GO:0017061">
    <property type="term" value="F:S-methyl-5-thioadenosine phosphorylase activity"/>
    <property type="evidence" value="ECO:0007669"/>
    <property type="project" value="UniProtKB-EC"/>
</dbReference>
<dbReference type="CDD" id="cd16833">
    <property type="entry name" value="YfiH"/>
    <property type="match status" value="1"/>
</dbReference>
<dbReference type="Gene3D" id="3.60.140.10">
    <property type="entry name" value="CNF1/YfiH-like putative cysteine hydrolases"/>
    <property type="match status" value="1"/>
</dbReference>
<dbReference type="InterPro" id="IPR003730">
    <property type="entry name" value="Cu_polyphenol_OxRdtase"/>
</dbReference>
<dbReference type="InterPro" id="IPR038371">
    <property type="entry name" value="Cu_polyphenol_OxRdtase_sf"/>
</dbReference>
<dbReference type="InterPro" id="IPR011324">
    <property type="entry name" value="Cytotoxic_necrot_fac-like_cat"/>
</dbReference>
<dbReference type="NCBIfam" id="TIGR00726">
    <property type="entry name" value="peptidoglycan editing factor PgeF"/>
    <property type="match status" value="1"/>
</dbReference>
<dbReference type="PANTHER" id="PTHR30616:SF2">
    <property type="entry name" value="PURINE NUCLEOSIDE PHOSPHORYLASE LACC1"/>
    <property type="match status" value="1"/>
</dbReference>
<dbReference type="PANTHER" id="PTHR30616">
    <property type="entry name" value="UNCHARACTERIZED PROTEIN YFIH"/>
    <property type="match status" value="1"/>
</dbReference>
<dbReference type="Pfam" id="PF02578">
    <property type="entry name" value="Cu-oxidase_4"/>
    <property type="match status" value="1"/>
</dbReference>
<dbReference type="SUPFAM" id="SSF64438">
    <property type="entry name" value="CNF1/YfiH-like putative cysteine hydrolases"/>
    <property type="match status" value="1"/>
</dbReference>
<gene>
    <name type="ordered locus">aq_167</name>
</gene>
<feature type="chain" id="PRO_0000163156" description="Purine nucleoside phosphorylase aq_167">
    <location>
        <begin position="1"/>
        <end position="206"/>
    </location>
</feature>
<feature type="binding site" evidence="2">
    <location>
        <position position="42"/>
    </location>
    <ligand>
        <name>Zn(2+)</name>
        <dbReference type="ChEBI" id="CHEBI:29105"/>
        <note>catalytic</note>
    </ligand>
</feature>
<feature type="binding site" evidence="2">
    <location>
        <position position="78"/>
    </location>
    <ligand>
        <name>Zn(2+)</name>
        <dbReference type="ChEBI" id="CHEBI:29105"/>
        <note>catalytic</note>
    </ligand>
</feature>
<feature type="binding site" evidence="2">
    <location>
        <position position="93"/>
    </location>
    <ligand>
        <name>Zn(2+)</name>
        <dbReference type="ChEBI" id="CHEBI:29105"/>
        <note>catalytic</note>
    </ligand>
</feature>
<sequence>MYKQDFPEGKEALNLEIRLGNKLVRFRKFTGKEKIYLPIQRHTDKVIKLIDKDSPPLEGDAVITNLKNVEIGVRTADCVPIILLGKEWVGAVHAGWRGLKKGIIAKTLKALKEEGEDDITALVFPSAKGCCYEVGKEFKEFFRRNLKERNGKLFFDPQREAVEQLRENGIKSILVWEKCTICSPELPSYRRDKTKERMLTSVVILF</sequence>
<keyword id="KW-0186">Copper</keyword>
<keyword id="KW-0378">Hydrolase</keyword>
<keyword id="KW-0479">Metal-binding</keyword>
<keyword id="KW-0560">Oxidoreductase</keyword>
<keyword id="KW-1185">Reference proteome</keyword>
<keyword id="KW-0808">Transferase</keyword>
<keyword id="KW-0862">Zinc</keyword>
<protein>
    <recommendedName>
        <fullName>Purine nucleoside phosphorylase aq_167</fullName>
        <ecNumber evidence="2">2.4.2.1</ecNumber>
    </recommendedName>
    <alternativeName>
        <fullName>Adenosine deaminase aq_167</fullName>
        <ecNumber evidence="2">3.5.4.4</ecNumber>
    </alternativeName>
    <alternativeName>
        <fullName>S-methyl-5'-thioadenosine phosphorylase aq_167</fullName>
        <ecNumber evidence="2">2.4.2.28</ecNumber>
    </alternativeName>
</protein>
<organism>
    <name type="scientific">Aquifex aeolicus (strain VF5)</name>
    <dbReference type="NCBI Taxonomy" id="224324"/>
    <lineage>
        <taxon>Bacteria</taxon>
        <taxon>Pseudomonadati</taxon>
        <taxon>Aquificota</taxon>
        <taxon>Aquificia</taxon>
        <taxon>Aquificales</taxon>
        <taxon>Aquificaceae</taxon>
        <taxon>Aquifex</taxon>
    </lineage>
</organism>
<name>PURNU_AQUAE</name>
<proteinExistence type="inferred from homology"/>
<accession>O66554</accession>
<reference key="1">
    <citation type="journal article" date="1998" name="Nature">
        <title>The complete genome of the hyperthermophilic bacterium Aquifex aeolicus.</title>
        <authorList>
            <person name="Deckert G."/>
            <person name="Warren P.V."/>
            <person name="Gaasterland T."/>
            <person name="Young W.G."/>
            <person name="Lenox A.L."/>
            <person name="Graham D.E."/>
            <person name="Overbeek R."/>
            <person name="Snead M.A."/>
            <person name="Keller M."/>
            <person name="Aujay M."/>
            <person name="Huber R."/>
            <person name="Feldman R.A."/>
            <person name="Short J.M."/>
            <person name="Olsen G.J."/>
            <person name="Swanson R.V."/>
        </authorList>
    </citation>
    <scope>NUCLEOTIDE SEQUENCE [LARGE SCALE GENOMIC DNA]</scope>
    <source>
        <strain>VF5</strain>
    </source>
</reference>
<evidence type="ECO:0000250" key="1">
    <source>
        <dbReference type="UniProtKB" id="P33644"/>
    </source>
</evidence>
<evidence type="ECO:0000250" key="2">
    <source>
        <dbReference type="UniProtKB" id="P84138"/>
    </source>
</evidence>
<evidence type="ECO:0000250" key="3">
    <source>
        <dbReference type="UniProtKB" id="Q1EIR0"/>
    </source>
</evidence>
<evidence type="ECO:0000305" key="4"/>
<comment type="function">
    <text evidence="2">Purine nucleoside enzyme that catalyzes the phosphorolysis of adenosine and inosine nucleosides, yielding D-ribose 1-phosphate and the respective free bases, adenine and hypoxanthine. Also catalyzes the phosphorolysis of S-methyl-5'-thioadenosine into adenine and S-methyl-5-thio-alpha-D-ribose 1-phosphate. Also has adenosine deaminase activity.</text>
</comment>
<comment type="catalytic activity">
    <reaction evidence="2">
        <text>adenosine + phosphate = alpha-D-ribose 1-phosphate + adenine</text>
        <dbReference type="Rhea" id="RHEA:27642"/>
        <dbReference type="ChEBI" id="CHEBI:16335"/>
        <dbReference type="ChEBI" id="CHEBI:16708"/>
        <dbReference type="ChEBI" id="CHEBI:43474"/>
        <dbReference type="ChEBI" id="CHEBI:57720"/>
        <dbReference type="EC" id="2.4.2.1"/>
    </reaction>
    <physiologicalReaction direction="left-to-right" evidence="2">
        <dbReference type="Rhea" id="RHEA:27643"/>
    </physiologicalReaction>
</comment>
<comment type="catalytic activity">
    <reaction evidence="2">
        <text>S-methyl-5'-thioadenosine + phosphate = 5-(methylsulfanyl)-alpha-D-ribose 1-phosphate + adenine</text>
        <dbReference type="Rhea" id="RHEA:11852"/>
        <dbReference type="ChEBI" id="CHEBI:16708"/>
        <dbReference type="ChEBI" id="CHEBI:17509"/>
        <dbReference type="ChEBI" id="CHEBI:43474"/>
        <dbReference type="ChEBI" id="CHEBI:58533"/>
        <dbReference type="EC" id="2.4.2.28"/>
    </reaction>
    <physiologicalReaction direction="left-to-right" evidence="2">
        <dbReference type="Rhea" id="RHEA:11853"/>
    </physiologicalReaction>
</comment>
<comment type="catalytic activity">
    <reaction evidence="2">
        <text>inosine + phosphate = alpha-D-ribose 1-phosphate + hypoxanthine</text>
        <dbReference type="Rhea" id="RHEA:27646"/>
        <dbReference type="ChEBI" id="CHEBI:17368"/>
        <dbReference type="ChEBI" id="CHEBI:17596"/>
        <dbReference type="ChEBI" id="CHEBI:43474"/>
        <dbReference type="ChEBI" id="CHEBI:57720"/>
        <dbReference type="EC" id="2.4.2.1"/>
    </reaction>
    <physiologicalReaction direction="left-to-right" evidence="2">
        <dbReference type="Rhea" id="RHEA:27647"/>
    </physiologicalReaction>
</comment>
<comment type="catalytic activity">
    <reaction evidence="2">
        <text>adenosine + H2O + H(+) = inosine + NH4(+)</text>
        <dbReference type="Rhea" id="RHEA:24408"/>
        <dbReference type="ChEBI" id="CHEBI:15377"/>
        <dbReference type="ChEBI" id="CHEBI:15378"/>
        <dbReference type="ChEBI" id="CHEBI:16335"/>
        <dbReference type="ChEBI" id="CHEBI:17596"/>
        <dbReference type="ChEBI" id="CHEBI:28938"/>
        <dbReference type="EC" id="3.5.4.4"/>
    </reaction>
    <physiologicalReaction direction="left-to-right" evidence="2">
        <dbReference type="Rhea" id="RHEA:24409"/>
    </physiologicalReaction>
</comment>
<comment type="cofactor">
    <cofactor evidence="1">
        <name>Cu(2+)</name>
        <dbReference type="ChEBI" id="CHEBI:29036"/>
    </cofactor>
    <cofactor evidence="2">
        <name>Zn(2+)</name>
        <dbReference type="ChEBI" id="CHEBI:29105"/>
    </cofactor>
</comment>
<comment type="subunit">
    <text evidence="3">Homodimer.</text>
</comment>
<comment type="similarity">
    <text evidence="4">Belongs to the purine nucleoside phosphorylase YfiH/LACC1 family.</text>
</comment>